<name>H4_SOLLC</name>
<reference key="1">
    <citation type="journal article" date="1994" name="Planta">
        <title>The pattern of histone H4 expression in the tomato shoot apex changes during development.</title>
        <authorList>
            <person name="Brandstaedter J.U."/>
            <person name="Rossbach C."/>
            <person name="Thers K."/>
        </authorList>
    </citation>
    <scope>NUCLEOTIDE SEQUENCE [MRNA]</scope>
    <source>
        <strain>cv. VFNT Cherry</strain>
        <tissue>Shoot apex</tissue>
    </source>
</reference>
<comment type="function">
    <text>Core component of nucleosome. Nucleosomes wrap and compact DNA into chromatin, limiting DNA accessibility to the cellular machineries which require DNA as a template. Histones thereby play a central role in transcription regulation, DNA repair, DNA replication and chromosomal stability. DNA accessibility is regulated via a complex set of post-translational modifications of histones, also called histone code, and nucleosome remodeling.</text>
</comment>
<comment type="subunit">
    <text>The nucleosome is a histone octamer containing two molecules each of H2A, H2B, H3 and H4 assembled in one H3-H4 heterotetramer and two H2A-H2B heterodimers. The octamer wraps approximately 147 bp of DNA.</text>
</comment>
<comment type="subcellular location">
    <subcellularLocation>
        <location evidence="1">Nucleus</location>
    </subcellularLocation>
    <subcellularLocation>
        <location evidence="1">Chromosome</location>
    </subcellularLocation>
</comment>
<comment type="similarity">
    <text evidence="3">Belongs to the histone H4 family.</text>
</comment>
<sequence length="103" mass="11425">MSGRGKGGKGLGKGGAKRHRKVLRDNIQGITKPAIRRLARRGGVKRISGLIYEETRGVLKIFLENVIRDSVTYTEHARRKTVTAMDVVYALKRQGRTLYGFGG</sequence>
<feature type="initiator methionine" description="Removed" evidence="1">
    <location>
        <position position="1"/>
    </location>
</feature>
<feature type="chain" id="PRO_0000158322" description="Histone H4">
    <location>
        <begin position="2"/>
        <end position="103"/>
    </location>
</feature>
<feature type="DNA-binding region">
    <location>
        <begin position="17"/>
        <end position="21"/>
    </location>
</feature>
<feature type="region of interest" description="Disordered" evidence="2">
    <location>
        <begin position="1"/>
        <end position="20"/>
    </location>
</feature>
<feature type="compositionally biased region" description="Gly residues" evidence="2">
    <location>
        <begin position="1"/>
        <end position="14"/>
    </location>
</feature>
<feature type="modified residue" description="N-acetylserine" evidence="1">
    <location>
        <position position="2"/>
    </location>
</feature>
<feature type="modified residue" description="N6-acetyllysine" evidence="1">
    <location>
        <position position="6"/>
    </location>
</feature>
<feature type="modified residue" description="N6-acetyllysine" evidence="1">
    <location>
        <position position="9"/>
    </location>
</feature>
<feature type="modified residue" description="N6-acetyllysine" evidence="1">
    <location>
        <position position="13"/>
    </location>
</feature>
<feature type="modified residue" description="N6-acetyllysine" evidence="1">
    <location>
        <position position="17"/>
    </location>
</feature>
<feature type="modified residue" description="N6-acetyllysine" evidence="1">
    <location>
        <position position="21"/>
    </location>
</feature>
<organism>
    <name type="scientific">Solanum lycopersicum</name>
    <name type="common">Tomato</name>
    <name type="synonym">Lycopersicon esculentum</name>
    <dbReference type="NCBI Taxonomy" id="4081"/>
    <lineage>
        <taxon>Eukaryota</taxon>
        <taxon>Viridiplantae</taxon>
        <taxon>Streptophyta</taxon>
        <taxon>Embryophyta</taxon>
        <taxon>Tracheophyta</taxon>
        <taxon>Spermatophyta</taxon>
        <taxon>Magnoliopsida</taxon>
        <taxon>eudicotyledons</taxon>
        <taxon>Gunneridae</taxon>
        <taxon>Pentapetalae</taxon>
        <taxon>asterids</taxon>
        <taxon>lamiids</taxon>
        <taxon>Solanales</taxon>
        <taxon>Solanaceae</taxon>
        <taxon>Solanoideae</taxon>
        <taxon>Solaneae</taxon>
        <taxon>Solanum</taxon>
        <taxon>Solanum subgen. Lycopersicon</taxon>
    </lineage>
</organism>
<evidence type="ECO:0000250" key="1"/>
<evidence type="ECO:0000256" key="2">
    <source>
        <dbReference type="SAM" id="MobiDB-lite"/>
    </source>
</evidence>
<evidence type="ECO:0000305" key="3"/>
<keyword id="KW-0007">Acetylation</keyword>
<keyword id="KW-0158">Chromosome</keyword>
<keyword id="KW-0238">DNA-binding</keyword>
<keyword id="KW-0544">Nucleosome core</keyword>
<keyword id="KW-0539">Nucleus</keyword>
<keyword id="KW-1185">Reference proteome</keyword>
<protein>
    <recommendedName>
        <fullName>Histone H4</fullName>
    </recommendedName>
</protein>
<dbReference type="EMBL" id="X69179">
    <property type="protein sequence ID" value="CAA48923.1"/>
    <property type="molecule type" value="mRNA"/>
</dbReference>
<dbReference type="EMBL" id="X69180">
    <property type="protein sequence ID" value="CAA48924.1"/>
    <property type="molecule type" value="mRNA"/>
</dbReference>
<dbReference type="PIR" id="S32769">
    <property type="entry name" value="S32769"/>
</dbReference>
<dbReference type="RefSeq" id="NP_001234118.1">
    <property type="nucleotide sequence ID" value="NM_001247189.1"/>
</dbReference>
<dbReference type="RefSeq" id="NP_001234121.1">
    <property type="nucleotide sequence ID" value="NM_001247192.2"/>
</dbReference>
<dbReference type="RefSeq" id="XP_004239779.1">
    <property type="nucleotide sequence ID" value="XM_004239731.5"/>
</dbReference>
<dbReference type="RefSeq" id="XP_004241478.1">
    <property type="nucleotide sequence ID" value="XM_004241430.5"/>
</dbReference>
<dbReference type="RefSeq" id="XP_004251292.1">
    <property type="nucleotide sequence ID" value="XM_004251244.5"/>
</dbReference>
<dbReference type="RefSeq" id="XP_010313539.2">
    <property type="nucleotide sequence ID" value="XM_010315237.4"/>
</dbReference>
<dbReference type="RefSeq" id="XP_025883894.2">
    <property type="nucleotide sequence ID" value="XM_026028109.2"/>
</dbReference>
<dbReference type="RefSeq" id="XP_025887139.2">
    <property type="nucleotide sequence ID" value="XM_026031354.2"/>
</dbReference>
<dbReference type="RefSeq" id="XP_025887529.2">
    <property type="nucleotide sequence ID" value="XM_026031744.2"/>
</dbReference>
<dbReference type="RefSeq" id="XP_069154940.1">
    <property type="nucleotide sequence ID" value="XM_069298839.1"/>
</dbReference>
<dbReference type="RefSeq" id="XP_069154941.1">
    <property type="nucleotide sequence ID" value="XM_069298840.1"/>
</dbReference>
<dbReference type="RefSeq" id="XP_069155038.1">
    <property type="nucleotide sequence ID" value="XM_069298937.1"/>
</dbReference>
<dbReference type="SMR" id="P35057"/>
<dbReference type="STRING" id="4081.P35057"/>
<dbReference type="PaxDb" id="4081-Solyc04g011390.1.1"/>
<dbReference type="EnsemblPlants" id="Solyc04g011390.1.1">
    <property type="protein sequence ID" value="Solyc04g011390.1.1.1"/>
    <property type="gene ID" value="Solyc04g011390.1"/>
</dbReference>
<dbReference type="EnsemblPlants" id="Solyc05g054610.1.1">
    <property type="protein sequence ID" value="Solyc05g054610.1.1.1"/>
    <property type="gene ID" value="Solyc05g054610.1"/>
</dbReference>
<dbReference type="EnsemblPlants" id="Solyc06g005420.1.1">
    <property type="protein sequence ID" value="Solyc06g005420.1.1.1"/>
    <property type="gene ID" value="Solyc06g005420.1"/>
</dbReference>
<dbReference type="EnsemblPlants" id="Solyc06g005430.1.1">
    <property type="protein sequence ID" value="Solyc06g005430.1.1.1"/>
    <property type="gene ID" value="Solyc06g005430.1"/>
</dbReference>
<dbReference type="EnsemblPlants" id="Solyc06g072240.1.1">
    <property type="protein sequence ID" value="Solyc06g072240.1.1.1"/>
    <property type="gene ID" value="Solyc06g072240.1"/>
</dbReference>
<dbReference type="EnsemblPlants" id="Solyc06g075830.2.1">
    <property type="protein sequence ID" value="Solyc06g075830.2.1"/>
    <property type="gene ID" value="Solyc06g075830.2"/>
</dbReference>
<dbReference type="EnsemblPlants" id="Solyc06g075930.1.1">
    <property type="protein sequence ID" value="Solyc06g075930.1.1.1"/>
    <property type="gene ID" value="Solyc06g075930.1"/>
</dbReference>
<dbReference type="EnsemblPlants" id="Solyc06g075960.1.1">
    <property type="protein sequence ID" value="Solyc06g075960.1.1.1"/>
    <property type="gene ID" value="Solyc06g075960.1"/>
</dbReference>
<dbReference type="EnsemblPlants" id="Solyc11g072860.2.1">
    <property type="protein sequence ID" value="Solyc11g072860.2.1.1"/>
    <property type="gene ID" value="Solyc11g072860.2"/>
</dbReference>
<dbReference type="GeneID" id="101248209"/>
<dbReference type="GeneID" id="101252889"/>
<dbReference type="GeneID" id="101252991"/>
<dbReference type="GeneID" id="101256351"/>
<dbReference type="GeneID" id="101256941"/>
<dbReference type="GeneID" id="101260642"/>
<dbReference type="GeneID" id="138349012"/>
<dbReference type="GeneID" id="138349013"/>
<dbReference type="GeneID" id="138349082"/>
<dbReference type="GeneID" id="544080"/>
<dbReference type="GeneID" id="544081"/>
<dbReference type="Gramene" id="Solyc04g011390.1.1">
    <property type="protein sequence ID" value="Solyc04g011390.1.1.1"/>
    <property type="gene ID" value="Solyc04g011390.1"/>
</dbReference>
<dbReference type="Gramene" id="Solyc05g054610.1.1">
    <property type="protein sequence ID" value="Solyc05g054610.1.1.1"/>
    <property type="gene ID" value="Solyc05g054610.1"/>
</dbReference>
<dbReference type="Gramene" id="Solyc06g005420.1.1">
    <property type="protein sequence ID" value="Solyc06g005420.1.1.1"/>
    <property type="gene ID" value="Solyc06g005420.1"/>
</dbReference>
<dbReference type="Gramene" id="Solyc06g005430.1.1">
    <property type="protein sequence ID" value="Solyc06g005430.1.1.1"/>
    <property type="gene ID" value="Solyc06g005430.1"/>
</dbReference>
<dbReference type="Gramene" id="Solyc06g072240.1.1">
    <property type="protein sequence ID" value="Solyc06g072240.1.1.1"/>
    <property type="gene ID" value="Solyc06g072240.1"/>
</dbReference>
<dbReference type="Gramene" id="Solyc06g075830.2.1">
    <property type="protein sequence ID" value="Solyc06g075830.2.1"/>
    <property type="gene ID" value="Solyc06g075830.2"/>
</dbReference>
<dbReference type="Gramene" id="Solyc06g075930.1.1">
    <property type="protein sequence ID" value="Solyc06g075930.1.1.1"/>
    <property type="gene ID" value="Solyc06g075930.1"/>
</dbReference>
<dbReference type="Gramene" id="Solyc06g075960.1.1">
    <property type="protein sequence ID" value="Solyc06g075960.1.1.1"/>
    <property type="gene ID" value="Solyc06g075960.1"/>
</dbReference>
<dbReference type="Gramene" id="Solyc11g072860.2.1">
    <property type="protein sequence ID" value="Solyc11g072860.2.1.1"/>
    <property type="gene ID" value="Solyc11g072860.2"/>
</dbReference>
<dbReference type="KEGG" id="sly:101248209"/>
<dbReference type="KEGG" id="sly:101256351"/>
<dbReference type="KEGG" id="sly:101256941"/>
<dbReference type="KEGG" id="sly:101260642"/>
<dbReference type="KEGG" id="sly:544080"/>
<dbReference type="KEGG" id="sly:544081"/>
<dbReference type="eggNOG" id="KOG3467">
    <property type="taxonomic scope" value="Eukaryota"/>
</dbReference>
<dbReference type="HOGENOM" id="CLU_109117_2_3_1"/>
<dbReference type="InParanoid" id="P35057"/>
<dbReference type="OrthoDB" id="1923506at2759"/>
<dbReference type="PhylomeDB" id="P35057"/>
<dbReference type="Proteomes" id="UP000004994">
    <property type="component" value="Chromosome 11"/>
</dbReference>
<dbReference type="Proteomes" id="UP000004994">
    <property type="component" value="Chromosome 4"/>
</dbReference>
<dbReference type="Proteomes" id="UP000004994">
    <property type="component" value="Chromosome 5"/>
</dbReference>
<dbReference type="Proteomes" id="UP000004994">
    <property type="component" value="Chromosome 6"/>
</dbReference>
<dbReference type="GO" id="GO:0000786">
    <property type="term" value="C:nucleosome"/>
    <property type="evidence" value="ECO:0007669"/>
    <property type="project" value="UniProtKB-KW"/>
</dbReference>
<dbReference type="GO" id="GO:0005634">
    <property type="term" value="C:nucleus"/>
    <property type="evidence" value="ECO:0007669"/>
    <property type="project" value="UniProtKB-SubCell"/>
</dbReference>
<dbReference type="GO" id="GO:0003677">
    <property type="term" value="F:DNA binding"/>
    <property type="evidence" value="ECO:0000318"/>
    <property type="project" value="GO_Central"/>
</dbReference>
<dbReference type="GO" id="GO:0046982">
    <property type="term" value="F:protein heterodimerization activity"/>
    <property type="evidence" value="ECO:0007669"/>
    <property type="project" value="InterPro"/>
</dbReference>
<dbReference type="GO" id="GO:0030527">
    <property type="term" value="F:structural constituent of chromatin"/>
    <property type="evidence" value="ECO:0007669"/>
    <property type="project" value="InterPro"/>
</dbReference>
<dbReference type="GO" id="GO:0006334">
    <property type="term" value="P:nucleosome assembly"/>
    <property type="evidence" value="ECO:0000318"/>
    <property type="project" value="GO_Central"/>
</dbReference>
<dbReference type="CDD" id="cd22912">
    <property type="entry name" value="HFD_H4"/>
    <property type="match status" value="1"/>
</dbReference>
<dbReference type="FunFam" id="1.10.20.10:FF:000002">
    <property type="entry name" value="Histone H4"/>
    <property type="match status" value="1"/>
</dbReference>
<dbReference type="Gene3D" id="1.10.20.10">
    <property type="entry name" value="Histone, subunit A"/>
    <property type="match status" value="1"/>
</dbReference>
<dbReference type="InterPro" id="IPR035425">
    <property type="entry name" value="CENP-T/H4_C"/>
</dbReference>
<dbReference type="InterPro" id="IPR009072">
    <property type="entry name" value="Histone-fold"/>
</dbReference>
<dbReference type="InterPro" id="IPR001951">
    <property type="entry name" value="Histone_H4"/>
</dbReference>
<dbReference type="InterPro" id="IPR019809">
    <property type="entry name" value="Histone_H4_CS"/>
</dbReference>
<dbReference type="PANTHER" id="PTHR10484">
    <property type="entry name" value="HISTONE H4"/>
    <property type="match status" value="1"/>
</dbReference>
<dbReference type="Pfam" id="PF15511">
    <property type="entry name" value="CENP-T_C"/>
    <property type="match status" value="1"/>
</dbReference>
<dbReference type="PRINTS" id="PR00623">
    <property type="entry name" value="HISTONEH4"/>
</dbReference>
<dbReference type="SMART" id="SM00417">
    <property type="entry name" value="H4"/>
    <property type="match status" value="1"/>
</dbReference>
<dbReference type="SUPFAM" id="SSF47113">
    <property type="entry name" value="Histone-fold"/>
    <property type="match status" value="1"/>
</dbReference>
<dbReference type="PROSITE" id="PS00047">
    <property type="entry name" value="HISTONE_H4"/>
    <property type="match status" value="1"/>
</dbReference>
<proteinExistence type="inferred from homology"/>
<accession>P35057</accession>